<evidence type="ECO:0000255" key="1">
    <source>
        <dbReference type="HAMAP-Rule" id="MF_01503"/>
    </source>
</evidence>
<dbReference type="EMBL" id="CP001147">
    <property type="protein sequence ID" value="ACI20909.1"/>
    <property type="molecule type" value="Genomic_DNA"/>
</dbReference>
<dbReference type="RefSeq" id="WP_012545639.1">
    <property type="nucleotide sequence ID" value="NC_011296.1"/>
</dbReference>
<dbReference type="RefSeq" id="YP_002248252.1">
    <property type="nucleotide sequence ID" value="NC_011296.1"/>
</dbReference>
<dbReference type="SMR" id="B5YJ37"/>
<dbReference type="STRING" id="289376.THEYE_A0405"/>
<dbReference type="EnsemblBacteria" id="ACI20909">
    <property type="protein sequence ID" value="ACI20909"/>
    <property type="gene ID" value="THEYE_A0405"/>
</dbReference>
<dbReference type="KEGG" id="tye:THEYE_A0405"/>
<dbReference type="PATRIC" id="fig|289376.4.peg.400"/>
<dbReference type="eggNOG" id="COG2052">
    <property type="taxonomic scope" value="Bacteria"/>
</dbReference>
<dbReference type="HOGENOM" id="CLU_165326_0_0_0"/>
<dbReference type="InParanoid" id="B5YJ37"/>
<dbReference type="OrthoDB" id="5432174at2"/>
<dbReference type="Proteomes" id="UP000000718">
    <property type="component" value="Chromosome"/>
</dbReference>
<dbReference type="HAMAP" id="MF_01503">
    <property type="entry name" value="RemA"/>
    <property type="match status" value="1"/>
</dbReference>
<dbReference type="InterPro" id="IPR007169">
    <property type="entry name" value="RemA-like"/>
</dbReference>
<dbReference type="NCBIfam" id="NF003315">
    <property type="entry name" value="PRK04323.1"/>
    <property type="match status" value="1"/>
</dbReference>
<dbReference type="PANTHER" id="PTHR38449:SF1">
    <property type="entry name" value="REGULATORY PROTEIN SSL2874-RELATED"/>
    <property type="match status" value="1"/>
</dbReference>
<dbReference type="PANTHER" id="PTHR38449">
    <property type="entry name" value="REGULATORY PROTEIN TM_1690-RELATED"/>
    <property type="match status" value="1"/>
</dbReference>
<dbReference type="Pfam" id="PF04025">
    <property type="entry name" value="RemA-like"/>
    <property type="match status" value="1"/>
</dbReference>
<proteinExistence type="inferred from homology"/>
<reference key="1">
    <citation type="submission" date="2008-08" db="EMBL/GenBank/DDBJ databases">
        <title>The complete genome sequence of Thermodesulfovibrio yellowstonii strain ATCC 51303 / DSM 11347 / YP87.</title>
        <authorList>
            <person name="Dodson R.J."/>
            <person name="Durkin A.S."/>
            <person name="Wu M."/>
            <person name="Eisen J."/>
            <person name="Sutton G."/>
        </authorList>
    </citation>
    <scope>NUCLEOTIDE SEQUENCE [LARGE SCALE GENOMIC DNA]</scope>
    <source>
        <strain>ATCC 51303 / DSM 11347 / YP87</strain>
    </source>
</reference>
<name>Y405_THEYD</name>
<protein>
    <recommendedName>
        <fullName evidence="1">Putative regulatory protein THEYE_A0405</fullName>
    </recommendedName>
</protein>
<organism>
    <name type="scientific">Thermodesulfovibrio yellowstonii (strain ATCC 51303 / DSM 11347 / YP87)</name>
    <dbReference type="NCBI Taxonomy" id="289376"/>
    <lineage>
        <taxon>Bacteria</taxon>
        <taxon>Pseudomonadati</taxon>
        <taxon>Nitrospirota</taxon>
        <taxon>Thermodesulfovibrionia</taxon>
        <taxon>Thermodesulfovibrionales</taxon>
        <taxon>Thermodesulfovibrionaceae</taxon>
        <taxon>Thermodesulfovibrio</taxon>
    </lineage>
</organism>
<feature type="chain" id="PRO_0000373789" description="Putative regulatory protein THEYE_A0405">
    <location>
        <begin position="1"/>
        <end position="85"/>
    </location>
</feature>
<accession>B5YJ37</accession>
<comment type="similarity">
    <text evidence="1">Belongs to the RemA family.</text>
</comment>
<keyword id="KW-1185">Reference proteome</keyword>
<sequence>MLVNIGFGNIVSLSRIIAVVNPGSSPMKRMKDEARKRGKLIDATEGRKTRSIIITDSDHIILSALQVETILQRINEINRVEDGDL</sequence>
<gene>
    <name type="ordered locus">THEYE_A0405</name>
</gene>